<sequence length="571" mass="63695">MSNKKTFKKYSRVAGLLTVALIIGNLVTANAESNKQNTASTETTTTNEQPKPESSELTIEKAGQKMDDMLNSNDMIKLAPKEMPLESAEKEEKKSEDKKKSEEDHTEEINDKIYSLNYNELEVLAKNGETIENFVPKEGVKKADKFIVIERKKKNINTTPVDISIIDSVTDRTYPAALQLANKGFTENKPDAVVTKRNPQKIHIDLPGMGDKATVEVNDPTYANVSTAIDNLVNQWHDNYSGGNTLPARTQYTESMVYSKSQIEAALNVNSKILDGTLGIDFKSISKGEKKVMIAAYKQIFYTVSANLPNNPADVFDKSVTFKDLQRKGVSNEAPPLFVSNVAYGRTVFVKLETSSKSNDVEAAFSAALKGTDVKTNGKYSDILENSSFTAVVLGGDAAEHNKVVTKDFDVIRNVIKDNATFSRKNPAYPISYTSVFLKNNKIAGVNNRTEYVETTSTEYTSGKINLSHQGAYVAQYEILWDEINYDDKGKEVITKRRWDNNWYSKTSPFSTVIPLGANSRNIRIMARECTGLAWEWWRKVIDERDVKLSKEINVNISGSTLSPYGSITYK</sequence>
<comment type="function">
    <text evidence="3">A cholesterol-dependent toxin that causes cytolysis by forming pores in cholesterol containing host membranes. After binding to target membranes, the protein undergoes a major conformation change, leading to its insertion in the host membrane and formation of an oligomeric pore complex. Cholesterol is required for binding to host membranes, membrane insertion and pore formation; cholesterol binding is mediated by a Thr-Leu pair in the C-terminus. Can be reversibly inactivated by oxidation.</text>
</comment>
<comment type="subunit">
    <text evidence="4">Homooligomeric pore complex of 35 to 50 subunits; when inserted in the host membrane.</text>
</comment>
<comment type="subcellular location">
    <subcellularLocation>
        <location evidence="2">Secreted</location>
    </subcellularLocation>
    <subcellularLocation>
        <location evidence="3">Host cell membrane</location>
        <topology evidence="4">Multi-pass membrane protein</topology>
    </subcellularLocation>
    <text evidence="2 4">Probably secreted as soluble protein by the accessory Sec system (By similarity). It then inserts into the host cell membrane and forms pores formed by transmembrane beta-strands (By similarity).</text>
</comment>
<comment type="similarity">
    <text evidence="7">Belongs to the cholesterol-dependent cytolysin family.</text>
</comment>
<comment type="sequence caution" evidence="7">
    <conflict type="erroneous initiation">
        <sequence resource="EMBL-CDS" id="AAT86323"/>
    </conflict>
    <text>Truncated N-terminus.</text>
</comment>
<feature type="signal peptide" evidence="5">
    <location>
        <begin position="1"/>
        <end position="33"/>
    </location>
</feature>
<feature type="chain" id="PRO_0000034109" description="Streptolysin O">
    <location>
        <begin position="34"/>
        <end position="571"/>
    </location>
</feature>
<feature type="transmembrane region" description="Beta stranded" evidence="4">
    <location>
        <begin position="260"/>
        <end position="273"/>
    </location>
</feature>
<feature type="transmembrane region" description="Beta stranded" evidence="4">
    <location>
        <begin position="280"/>
        <end position="289"/>
    </location>
</feature>
<feature type="transmembrane region" description="Beta stranded" evidence="4">
    <location>
        <begin position="358"/>
        <end position="367"/>
    </location>
</feature>
<feature type="transmembrane region" description="Beta stranded" evidence="4">
    <location>
        <begin position="375"/>
        <end position="387"/>
    </location>
</feature>
<feature type="region of interest" description="Disordered" evidence="6">
    <location>
        <begin position="32"/>
        <end position="56"/>
    </location>
</feature>
<feature type="region of interest" description="Disordered" evidence="6">
    <location>
        <begin position="81"/>
        <end position="108"/>
    </location>
</feature>
<feature type="short sequence motif" description="Conserved undecapeptide" evidence="7">
    <location>
        <begin position="529"/>
        <end position="539"/>
    </location>
</feature>
<feature type="short sequence motif" description="Cholesterol binding" evidence="1">
    <location>
        <position position="561"/>
    </location>
</feature>
<feature type="compositionally biased region" description="Low complexity" evidence="6">
    <location>
        <begin position="37"/>
        <end position="48"/>
    </location>
</feature>
<evidence type="ECO:0000250" key="1">
    <source>
        <dbReference type="UniProtKB" id="P0C2E9"/>
    </source>
</evidence>
<evidence type="ECO:0000250" key="2">
    <source>
        <dbReference type="UniProtKB" id="P0C2J9"/>
    </source>
</evidence>
<evidence type="ECO:0000250" key="3">
    <source>
        <dbReference type="UniProtKB" id="P13128"/>
    </source>
</evidence>
<evidence type="ECO:0000250" key="4">
    <source>
        <dbReference type="UniProtKB" id="Q04IN8"/>
    </source>
</evidence>
<evidence type="ECO:0000255" key="5"/>
<evidence type="ECO:0000256" key="6">
    <source>
        <dbReference type="SAM" id="MobiDB-lite"/>
    </source>
</evidence>
<evidence type="ECO:0000305" key="7"/>
<keyword id="KW-0204">Cytolysis</keyword>
<keyword id="KW-0354">Hemolysis</keyword>
<keyword id="KW-1032">Host cell membrane</keyword>
<keyword id="KW-1043">Host membrane</keyword>
<keyword id="KW-0446">Lipid-binding</keyword>
<keyword id="KW-0472">Membrane</keyword>
<keyword id="KW-0964">Secreted</keyword>
<keyword id="KW-0732">Signal</keyword>
<keyword id="KW-0800">Toxin</keyword>
<keyword id="KW-0812">Transmembrane</keyword>
<keyword id="KW-1134">Transmembrane beta strand</keyword>
<keyword id="KW-0843">Virulence</keyword>
<protein>
    <recommendedName>
        <fullName>Streptolysin O</fullName>
        <shortName>SLO</shortName>
    </recommendedName>
    <alternativeName>
        <fullName>Thiol-activated cytolysin</fullName>
    </alternativeName>
</protein>
<accession>Q5XE40</accession>
<dbReference type="EMBL" id="CP000003">
    <property type="protein sequence ID" value="AAT86323.1"/>
    <property type="status" value="ALT_INIT"/>
    <property type="molecule type" value="Genomic_DNA"/>
</dbReference>
<dbReference type="SMR" id="Q5XE40"/>
<dbReference type="KEGG" id="spa:M6_Spy0188"/>
<dbReference type="HOGENOM" id="CLU_026912_1_0_9"/>
<dbReference type="Proteomes" id="UP000001167">
    <property type="component" value="Chromosome"/>
</dbReference>
<dbReference type="GO" id="GO:0005576">
    <property type="term" value="C:extracellular region"/>
    <property type="evidence" value="ECO:0007669"/>
    <property type="project" value="UniProtKB-SubCell"/>
</dbReference>
<dbReference type="GO" id="GO:0020002">
    <property type="term" value="C:host cell plasma membrane"/>
    <property type="evidence" value="ECO:0007669"/>
    <property type="project" value="UniProtKB-SubCell"/>
</dbReference>
<dbReference type="GO" id="GO:0016020">
    <property type="term" value="C:membrane"/>
    <property type="evidence" value="ECO:0007669"/>
    <property type="project" value="UniProtKB-KW"/>
</dbReference>
<dbReference type="GO" id="GO:0015485">
    <property type="term" value="F:cholesterol binding"/>
    <property type="evidence" value="ECO:0007669"/>
    <property type="project" value="InterPro"/>
</dbReference>
<dbReference type="GO" id="GO:0090729">
    <property type="term" value="F:toxin activity"/>
    <property type="evidence" value="ECO:0007669"/>
    <property type="project" value="UniProtKB-KW"/>
</dbReference>
<dbReference type="GO" id="GO:0031640">
    <property type="term" value="P:killing of cells of another organism"/>
    <property type="evidence" value="ECO:0007669"/>
    <property type="project" value="UniProtKB-KW"/>
</dbReference>
<dbReference type="Gene3D" id="3.30.1040.20">
    <property type="match status" value="1"/>
</dbReference>
<dbReference type="Gene3D" id="3.40.30.40">
    <property type="entry name" value="Perfringolysin"/>
    <property type="match status" value="1"/>
</dbReference>
<dbReference type="Gene3D" id="2.60.40.1430">
    <property type="entry name" value="Perfringolysin, domain 4"/>
    <property type="match status" value="1"/>
</dbReference>
<dbReference type="Gene3D" id="3.90.840.10">
    <property type="entry name" value="Thiol-activated cytolysin superfamily/Thiol-activated cytolysin, alpha-beta domain"/>
    <property type="match status" value="1"/>
</dbReference>
<dbReference type="InterPro" id="IPR035390">
    <property type="entry name" value="Thiol_cytolys_C"/>
</dbReference>
<dbReference type="InterPro" id="IPR038700">
    <property type="entry name" value="Thiol_cytolys_C_sf"/>
</dbReference>
<dbReference type="InterPro" id="IPR001869">
    <property type="entry name" value="Thiol_cytolysin"/>
</dbReference>
<dbReference type="InterPro" id="IPR036363">
    <property type="entry name" value="Thiol_cytolysin_ab_sf"/>
</dbReference>
<dbReference type="InterPro" id="IPR036359">
    <property type="entry name" value="Thiol_cytolysin_sf"/>
</dbReference>
<dbReference type="Pfam" id="PF17440">
    <property type="entry name" value="Thiol_cytolys_C"/>
    <property type="match status" value="1"/>
</dbReference>
<dbReference type="Pfam" id="PF01289">
    <property type="entry name" value="Thiol_cytolysin"/>
    <property type="match status" value="1"/>
</dbReference>
<dbReference type="PRINTS" id="PR01400">
    <property type="entry name" value="TACYTOLYSIN"/>
</dbReference>
<dbReference type="SUPFAM" id="SSF56978">
    <property type="entry name" value="Perfringolysin"/>
    <property type="match status" value="1"/>
</dbReference>
<dbReference type="PROSITE" id="PS00481">
    <property type="entry name" value="THIOL_CYTOLYSINS"/>
    <property type="match status" value="1"/>
</dbReference>
<gene>
    <name type="primary">slo</name>
    <name type="ordered locus">M6_Spy0188</name>
</gene>
<organism>
    <name type="scientific">Streptococcus pyogenes serotype M6 (strain ATCC BAA-946 / MGAS10394)</name>
    <dbReference type="NCBI Taxonomy" id="286636"/>
    <lineage>
        <taxon>Bacteria</taxon>
        <taxon>Bacillati</taxon>
        <taxon>Bacillota</taxon>
        <taxon>Bacilli</taxon>
        <taxon>Lactobacillales</taxon>
        <taxon>Streptococcaceae</taxon>
        <taxon>Streptococcus</taxon>
    </lineage>
</organism>
<name>TACY_STRP6</name>
<reference key="1">
    <citation type="journal article" date="2004" name="J. Infect. Dis.">
        <title>Progress toward characterization of the group A Streptococcus metagenome: complete genome sequence of a macrolide-resistant serotype M6 strain.</title>
        <authorList>
            <person name="Banks D.J."/>
            <person name="Porcella S.F."/>
            <person name="Barbian K.D."/>
            <person name="Beres S.B."/>
            <person name="Philips L.E."/>
            <person name="Voyich J.M."/>
            <person name="DeLeo F.R."/>
            <person name="Martin J.M."/>
            <person name="Somerville G.A."/>
            <person name="Musser J.M."/>
        </authorList>
    </citation>
    <scope>NUCLEOTIDE SEQUENCE [LARGE SCALE GENOMIC DNA]</scope>
    <source>
        <strain>ATCC BAA-946 / MGAS10394</strain>
    </source>
</reference>
<proteinExistence type="inferred from homology"/>